<sequence>MAAKIRRDDEVIVLTGKDKGKRGKVKNVLSSGKIIVEGINLVKKHQKPVPALNQPGGIVEKEAAIQVSNVALFNTVTGKADRVGFRFEDGKKVRFFKSNSETIK</sequence>
<comment type="function">
    <text evidence="1">One of two assembly initiator proteins, it binds directly to the 5'-end of the 23S rRNA, where it nucleates assembly of the 50S subunit.</text>
</comment>
<comment type="function">
    <text evidence="1">One of the proteins that surrounds the polypeptide exit tunnel on the outside of the subunit.</text>
</comment>
<comment type="subunit">
    <text evidence="1">Part of the 50S ribosomal subunit.</text>
</comment>
<comment type="similarity">
    <text evidence="1">Belongs to the universal ribosomal protein uL24 family.</text>
</comment>
<keyword id="KW-0687">Ribonucleoprotein</keyword>
<keyword id="KW-0689">Ribosomal protein</keyword>
<keyword id="KW-0694">RNA-binding</keyword>
<keyword id="KW-0699">rRNA-binding</keyword>
<dbReference type="EMBL" id="CP000653">
    <property type="protein sequence ID" value="ABP62397.1"/>
    <property type="molecule type" value="Genomic_DNA"/>
</dbReference>
<dbReference type="RefSeq" id="WP_015960711.1">
    <property type="nucleotide sequence ID" value="NC_009436.1"/>
</dbReference>
<dbReference type="SMR" id="A4WFB7"/>
<dbReference type="STRING" id="399742.Ent638_3740"/>
<dbReference type="GeneID" id="93306715"/>
<dbReference type="KEGG" id="ent:Ent638_3740"/>
<dbReference type="eggNOG" id="COG0198">
    <property type="taxonomic scope" value="Bacteria"/>
</dbReference>
<dbReference type="HOGENOM" id="CLU_093315_2_2_6"/>
<dbReference type="OrthoDB" id="9807419at2"/>
<dbReference type="Proteomes" id="UP000000230">
    <property type="component" value="Chromosome"/>
</dbReference>
<dbReference type="GO" id="GO:0005829">
    <property type="term" value="C:cytosol"/>
    <property type="evidence" value="ECO:0007669"/>
    <property type="project" value="UniProtKB-ARBA"/>
</dbReference>
<dbReference type="GO" id="GO:1990904">
    <property type="term" value="C:ribonucleoprotein complex"/>
    <property type="evidence" value="ECO:0007669"/>
    <property type="project" value="UniProtKB-KW"/>
</dbReference>
<dbReference type="GO" id="GO:0005840">
    <property type="term" value="C:ribosome"/>
    <property type="evidence" value="ECO:0007669"/>
    <property type="project" value="UniProtKB-KW"/>
</dbReference>
<dbReference type="GO" id="GO:0019843">
    <property type="term" value="F:rRNA binding"/>
    <property type="evidence" value="ECO:0007669"/>
    <property type="project" value="UniProtKB-UniRule"/>
</dbReference>
<dbReference type="GO" id="GO:0003735">
    <property type="term" value="F:structural constituent of ribosome"/>
    <property type="evidence" value="ECO:0007669"/>
    <property type="project" value="InterPro"/>
</dbReference>
<dbReference type="GO" id="GO:0006412">
    <property type="term" value="P:translation"/>
    <property type="evidence" value="ECO:0007669"/>
    <property type="project" value="UniProtKB-UniRule"/>
</dbReference>
<dbReference type="CDD" id="cd06089">
    <property type="entry name" value="KOW_RPL26"/>
    <property type="match status" value="1"/>
</dbReference>
<dbReference type="FunFam" id="2.30.30.30:FF:000004">
    <property type="entry name" value="50S ribosomal protein L24"/>
    <property type="match status" value="1"/>
</dbReference>
<dbReference type="Gene3D" id="2.30.30.30">
    <property type="match status" value="1"/>
</dbReference>
<dbReference type="HAMAP" id="MF_01326_B">
    <property type="entry name" value="Ribosomal_uL24_B"/>
    <property type="match status" value="1"/>
</dbReference>
<dbReference type="InterPro" id="IPR005824">
    <property type="entry name" value="KOW"/>
</dbReference>
<dbReference type="InterPro" id="IPR014722">
    <property type="entry name" value="Rib_uL2_dom2"/>
</dbReference>
<dbReference type="InterPro" id="IPR003256">
    <property type="entry name" value="Ribosomal_uL24"/>
</dbReference>
<dbReference type="InterPro" id="IPR005825">
    <property type="entry name" value="Ribosomal_uL24_CS"/>
</dbReference>
<dbReference type="InterPro" id="IPR041988">
    <property type="entry name" value="Ribosomal_uL24_KOW"/>
</dbReference>
<dbReference type="InterPro" id="IPR008991">
    <property type="entry name" value="Translation_prot_SH3-like_sf"/>
</dbReference>
<dbReference type="NCBIfam" id="TIGR01079">
    <property type="entry name" value="rplX_bact"/>
    <property type="match status" value="1"/>
</dbReference>
<dbReference type="PANTHER" id="PTHR12903">
    <property type="entry name" value="MITOCHONDRIAL RIBOSOMAL PROTEIN L24"/>
    <property type="match status" value="1"/>
</dbReference>
<dbReference type="Pfam" id="PF00467">
    <property type="entry name" value="KOW"/>
    <property type="match status" value="1"/>
</dbReference>
<dbReference type="Pfam" id="PF17136">
    <property type="entry name" value="ribosomal_L24"/>
    <property type="match status" value="1"/>
</dbReference>
<dbReference type="SMART" id="SM00739">
    <property type="entry name" value="KOW"/>
    <property type="match status" value="1"/>
</dbReference>
<dbReference type="SUPFAM" id="SSF50104">
    <property type="entry name" value="Translation proteins SH3-like domain"/>
    <property type="match status" value="1"/>
</dbReference>
<dbReference type="PROSITE" id="PS01108">
    <property type="entry name" value="RIBOSOMAL_L24"/>
    <property type="match status" value="1"/>
</dbReference>
<name>RL24_ENT38</name>
<evidence type="ECO:0000255" key="1">
    <source>
        <dbReference type="HAMAP-Rule" id="MF_01326"/>
    </source>
</evidence>
<evidence type="ECO:0000305" key="2"/>
<gene>
    <name evidence="1" type="primary">rplX</name>
    <name type="ordered locus">Ent638_3740</name>
</gene>
<proteinExistence type="inferred from homology"/>
<protein>
    <recommendedName>
        <fullName evidence="1">Large ribosomal subunit protein uL24</fullName>
    </recommendedName>
    <alternativeName>
        <fullName evidence="2">50S ribosomal protein L24</fullName>
    </alternativeName>
</protein>
<accession>A4WFB7</accession>
<organism>
    <name type="scientific">Enterobacter sp. (strain 638)</name>
    <dbReference type="NCBI Taxonomy" id="399742"/>
    <lineage>
        <taxon>Bacteria</taxon>
        <taxon>Pseudomonadati</taxon>
        <taxon>Pseudomonadota</taxon>
        <taxon>Gammaproteobacteria</taxon>
        <taxon>Enterobacterales</taxon>
        <taxon>Enterobacteriaceae</taxon>
        <taxon>Enterobacter</taxon>
    </lineage>
</organism>
<feature type="chain" id="PRO_1000067581" description="Large ribosomal subunit protein uL24">
    <location>
        <begin position="1"/>
        <end position="104"/>
    </location>
</feature>
<reference key="1">
    <citation type="journal article" date="2010" name="PLoS Genet.">
        <title>Genome sequence of the plant growth promoting endophytic bacterium Enterobacter sp. 638.</title>
        <authorList>
            <person name="Taghavi S."/>
            <person name="van der Lelie D."/>
            <person name="Hoffman A."/>
            <person name="Zhang Y.B."/>
            <person name="Walla M.D."/>
            <person name="Vangronsveld J."/>
            <person name="Newman L."/>
            <person name="Monchy S."/>
        </authorList>
    </citation>
    <scope>NUCLEOTIDE SEQUENCE [LARGE SCALE GENOMIC DNA]</scope>
    <source>
        <strain>638</strain>
    </source>
</reference>